<feature type="chain" id="PRO_0000221533" description="DELTA-stichotoxin-Hcr4a">
    <location>
        <begin position="1"/>
        <end position="175"/>
    </location>
</feature>
<feature type="region of interest" description="Plays an important role in the hemolytic activity" evidence="3">
    <location>
        <begin position="1"/>
        <end position="10"/>
    </location>
</feature>
<feature type="region of interest" description="N-terminal region" evidence="4">
    <location>
        <begin position="9"/>
        <end position="28"/>
    </location>
</feature>
<feature type="region of interest" description="Trp-rich region, which is important for the binding to lipid membrane" evidence="4">
    <location>
        <begin position="103"/>
        <end position="118"/>
    </location>
</feature>
<feature type="binding site" evidence="3">
    <location>
        <position position="52"/>
    </location>
    <ligand>
        <name>phosphocholine</name>
        <dbReference type="ChEBI" id="CHEBI:295975"/>
    </ligand>
</feature>
<feature type="binding site" evidence="3">
    <location>
        <position position="85"/>
    </location>
    <ligand>
        <name>phosphocholine</name>
        <dbReference type="ChEBI" id="CHEBI:295975"/>
    </ligand>
</feature>
<feature type="binding site" evidence="3">
    <location>
        <position position="103"/>
    </location>
    <ligand>
        <name>phosphocholine</name>
        <dbReference type="ChEBI" id="CHEBI:295975"/>
    </ligand>
</feature>
<feature type="binding site" evidence="3">
    <location>
        <position position="105"/>
    </location>
    <ligand>
        <name>phosphocholine</name>
        <dbReference type="ChEBI" id="CHEBI:295975"/>
    </ligand>
</feature>
<feature type="binding site" evidence="3">
    <location>
        <position position="131"/>
    </location>
    <ligand>
        <name>phosphocholine</name>
        <dbReference type="ChEBI" id="CHEBI:295975"/>
    </ligand>
</feature>
<feature type="binding site" evidence="3">
    <location>
        <position position="135"/>
    </location>
    <ligand>
        <name>phosphocholine</name>
        <dbReference type="ChEBI" id="CHEBI:295975"/>
    </ligand>
</feature>
<feature type="binding site" evidence="3">
    <location>
        <position position="136"/>
    </location>
    <ligand>
        <name>phosphocholine</name>
        <dbReference type="ChEBI" id="CHEBI:295975"/>
    </ligand>
</feature>
<feature type="site" description="Important in the initial contact with the lipid membrane" evidence="4">
    <location>
        <position position="111"/>
    </location>
</feature>
<feature type="site" description="Interacts with the lipid membrane" evidence="1">
    <location>
        <position position="141"/>
    </location>
</feature>
<feature type="sequence conflict" description="In Ref. 2; AA sequence." evidence="9" ref="2">
    <original>SLTFQILDKVLAELGQVSRK</original>
    <variation>GLGLKILIEVLGEGXVKVKI</variation>
    <location>
        <begin position="11"/>
        <end position="30"/>
    </location>
</feature>
<proteinExistence type="evidence at protein level"/>
<protein>
    <recommendedName>
        <fullName evidence="8">DELTA-stichotoxin-Hcr4a</fullName>
        <shortName evidence="8">DELTA-SHTX-Hcr4a</shortName>
    </recommendedName>
    <alternativeName>
        <fullName evidence="7">Cytolysin RTX-A</fullName>
    </alternativeName>
</protein>
<keyword id="KW-0204">Cytolysis</keyword>
<keyword id="KW-0903">Direct protein sequencing</keyword>
<keyword id="KW-0406">Ion transport</keyword>
<keyword id="KW-0472">Membrane</keyword>
<keyword id="KW-0166">Nematocyst</keyword>
<keyword id="KW-0964">Secreted</keyword>
<keyword id="KW-1052">Target cell membrane</keyword>
<keyword id="KW-1053">Target membrane</keyword>
<keyword id="KW-0800">Toxin</keyword>
<keyword id="KW-0812">Transmembrane</keyword>
<keyword id="KW-0813">Transport</keyword>
<comment type="function">
    <text evidence="5">Pore-forming protein that forms cations-selective hydrophilic pores of around 1 nm and causes cardiac stimulation and cytolysis. Pore formation is a multi-step process that involves specific recognition of membrane sphingomyelin (but neither cholesterol nor phosphatidylcholine) using aromatic rich region and adjacent phosphocholine (POC) binding site, firm binding to the membrane (mainly driven by hydrophobic interactions) accompanied by the transfer of the N-terminal region to the lipid-water interface and finally pore formation after oligomerization of monomers.</text>
</comment>
<comment type="subunit">
    <text evidence="2">Octamer or nonamer in membranes. Monomer in the soluble state.</text>
</comment>
<comment type="subcellular location">
    <subcellularLocation>
        <location evidence="2">Secreted</location>
    </subcellularLocation>
    <subcellularLocation>
        <location evidence="3">Nematocyst</location>
    </subcellularLocation>
    <subcellularLocation>
        <location evidence="2">Target cell membrane</location>
    </subcellularLocation>
    <text evidence="2">Forms an alpha-helical membrane channel in the prey.</text>
</comment>
<comment type="domain">
    <text evidence="4">Composed of a long N-terminal alpha-helix and a core region rich in beta-sheet structures. Before the pore formation, the alpha-helix binds the lipid membrane, partitions into the lipid-water interface and stabilizes the monomeric molecule on the membrane. Finally, it traverses the bilayer, thus forming the transmembrane pore.</text>
</comment>
<comment type="toxic dose">
    <text evidence="6">LD(50) is 50 ug/kg by intraperitoneal injection into mice.</text>
</comment>
<comment type="miscellaneous">
    <text>Hemolytic activity is 3.5 x 10(4) HU/mg.</text>
</comment>
<comment type="miscellaneous">
    <text evidence="9">A synonymy between H.magnifica and R.crispa is controversial.</text>
</comment>
<comment type="similarity">
    <text evidence="9">Belongs to the actinoporin family. Sea anemone subfamily.</text>
</comment>
<evidence type="ECO:0000250" key="1"/>
<evidence type="ECO:0000250" key="2">
    <source>
        <dbReference type="UniProtKB" id="B9W5G6"/>
    </source>
</evidence>
<evidence type="ECO:0000250" key="3">
    <source>
        <dbReference type="UniProtKB" id="P07845"/>
    </source>
</evidence>
<evidence type="ECO:0000250" key="4">
    <source>
        <dbReference type="UniProtKB" id="P61914"/>
    </source>
</evidence>
<evidence type="ECO:0000269" key="5">
    <source>
    </source>
</evidence>
<evidence type="ECO:0000269" key="6">
    <source>
    </source>
</evidence>
<evidence type="ECO:0000303" key="7">
    <source>
    </source>
</evidence>
<evidence type="ECO:0000303" key="8">
    <source>
    </source>
</evidence>
<evidence type="ECO:0000305" key="9"/>
<accession>P58691</accession>
<accession>Q5I4H2</accession>
<dbReference type="EMBL" id="AY855350">
    <property type="protein sequence ID" value="AAW47930.1"/>
    <property type="molecule type" value="mRNA"/>
</dbReference>
<dbReference type="SMR" id="P58691"/>
<dbReference type="TCDB" id="1.C.38.1.10">
    <property type="family name" value="the pore-forming equinatoxin (equinatoxin) family"/>
</dbReference>
<dbReference type="GO" id="GO:0005576">
    <property type="term" value="C:extracellular region"/>
    <property type="evidence" value="ECO:0007669"/>
    <property type="project" value="UniProtKB-SubCell"/>
</dbReference>
<dbReference type="GO" id="GO:0042151">
    <property type="term" value="C:nematocyst"/>
    <property type="evidence" value="ECO:0007669"/>
    <property type="project" value="UniProtKB-SubCell"/>
</dbReference>
<dbReference type="GO" id="GO:0044218">
    <property type="term" value="C:other organism cell membrane"/>
    <property type="evidence" value="ECO:0007669"/>
    <property type="project" value="UniProtKB-KW"/>
</dbReference>
<dbReference type="GO" id="GO:0046930">
    <property type="term" value="C:pore complex"/>
    <property type="evidence" value="ECO:0007669"/>
    <property type="project" value="InterPro"/>
</dbReference>
<dbReference type="GO" id="GO:0015267">
    <property type="term" value="F:channel activity"/>
    <property type="evidence" value="ECO:0007669"/>
    <property type="project" value="InterPro"/>
</dbReference>
<dbReference type="GO" id="GO:0090729">
    <property type="term" value="F:toxin activity"/>
    <property type="evidence" value="ECO:0007669"/>
    <property type="project" value="UniProtKB-KW"/>
</dbReference>
<dbReference type="GO" id="GO:0051715">
    <property type="term" value="P:cytolysis in another organism"/>
    <property type="evidence" value="ECO:0007669"/>
    <property type="project" value="InterPro"/>
</dbReference>
<dbReference type="GO" id="GO:0006812">
    <property type="term" value="P:monoatomic cation transport"/>
    <property type="evidence" value="ECO:0007669"/>
    <property type="project" value="InterPro"/>
</dbReference>
<dbReference type="GO" id="GO:0046931">
    <property type="term" value="P:pore complex assembly"/>
    <property type="evidence" value="ECO:0007669"/>
    <property type="project" value="InterPro"/>
</dbReference>
<dbReference type="FunFam" id="2.60.270.20:FF:000001">
    <property type="entry name" value="DELTA-actitoxin-Afr1a"/>
    <property type="match status" value="1"/>
</dbReference>
<dbReference type="Gene3D" id="2.60.270.20">
    <property type="entry name" value="Cytolysin/lectin"/>
    <property type="match status" value="1"/>
</dbReference>
<dbReference type="InterPro" id="IPR050677">
    <property type="entry name" value="Actinoporin_PFT"/>
</dbReference>
<dbReference type="InterPro" id="IPR009104">
    <property type="entry name" value="Anemon_actinoporin-like"/>
</dbReference>
<dbReference type="InterPro" id="IPR015926">
    <property type="entry name" value="Cytolysin/lectin"/>
</dbReference>
<dbReference type="PANTHER" id="PTHR40388">
    <property type="entry name" value="BRYOPORIN"/>
    <property type="match status" value="1"/>
</dbReference>
<dbReference type="PANTHER" id="PTHR40388:SF1">
    <property type="entry name" value="BRYOPORIN"/>
    <property type="match status" value="1"/>
</dbReference>
<dbReference type="Pfam" id="PF06369">
    <property type="entry name" value="Anemone_cytotox"/>
    <property type="match status" value="1"/>
</dbReference>
<dbReference type="SUPFAM" id="SSF63724">
    <property type="entry name" value="Cytolysin/lectin"/>
    <property type="match status" value="1"/>
</dbReference>
<reference key="1">
    <citation type="journal article" date="2006" name="Toxicon">
        <title>Amino acid sequence of RTX-A's isoform actinoporin from the sea anemone, Radianthus macrodactylus.</title>
        <authorList>
            <person name="Il'ina A.P."/>
            <person name="Lipkin A."/>
            <person name="Barsova E."/>
            <person name="Issaeva M."/>
            <person name="Leychenko E."/>
            <person name="Guzev K."/>
            <person name="Monastyrnaia M.M."/>
            <person name="Lukyanov S."/>
            <person name="Kozlovskaya E."/>
        </authorList>
    </citation>
    <scope>NUCLEOTIDE SEQUENCE [MRNA] OF 5-175</scope>
    <scope>HEMOLYTIC ACTIVITY</scope>
</reference>
<reference key="2">
    <citation type="journal article" date="1999" name="Bioorg. Khim.">
        <title>Isolation and characteristics of high molecular weight cytolysins from the sea anemone Radianthus macrodactylus.</title>
        <authorList>
            <person name="Monastyrnaia M.M."/>
            <person name="Zykova T.A."/>
            <person name="Kozlovskaya E.P."/>
        </authorList>
    </citation>
    <scope>PROTEIN SEQUENCE OF 1-30</scope>
    <scope>FUNCTION</scope>
</reference>
<reference key="3">
    <citation type="journal article" date="2002" name="Toxicon">
        <title>Biologically active polypeptides from the tropical sea anemone Radianthus macrodactylus.</title>
        <authorList>
            <person name="Monastyrnaia M.M."/>
            <person name="Zykova T.A."/>
            <person name="Apalikova O.V."/>
            <person name="Shwets T.V."/>
            <person name="Kozlovskaya E.P."/>
        </authorList>
    </citation>
    <scope>PROTEIN SEQUENCE OF 1-30</scope>
    <scope>TOXIC DOSE</scope>
</reference>
<reference key="4">
    <citation type="journal article" date="2009" name="Toxicon">
        <title>Molecular mechanism of pore formation by actinoporins.</title>
        <authorList>
            <person name="Kristan K.C."/>
            <person name="Viero G."/>
            <person name="Dalla Serra M."/>
            <person name="Macek P."/>
            <person name="Anderluh G."/>
        </authorList>
    </citation>
    <scope>REVIEW</scope>
</reference>
<reference key="5">
    <citation type="journal article" date="2010" name="Toxicon">
        <title>Actinoporins from the sea anemones, tropical Radianthus macrodactylus and northern Oulactis orientalis: comparative analysis of structure-function relationships.</title>
        <authorList>
            <person name="Monastyrnaya M."/>
            <person name="Leychenko E."/>
            <person name="Isaeva M."/>
            <person name="Likhatskaya G."/>
            <person name="Zelepuga E."/>
            <person name="Kostina E."/>
            <person name="Trifonov E."/>
            <person name="Nurminski E."/>
            <person name="Kozlovskaya E."/>
        </authorList>
    </citation>
    <scope>3D-STRUCTURE MODELING</scope>
</reference>
<reference key="6">
    <citation type="journal article" date="2012" name="Toxicon">
        <title>Development of a rational nomenclature for naming peptide and protein toxins from sea anemones.</title>
        <authorList>
            <person name="Oliveira J.S."/>
            <person name="Fuentes-Silva D."/>
            <person name="King G.F."/>
        </authorList>
    </citation>
    <scope>NOMENCLATURE</scope>
</reference>
<name>ACTPA_RADCR</name>
<organism>
    <name type="scientific">Radianthus crispa</name>
    <name type="common">Leathery sea anemone</name>
    <name type="synonym">Heteractis crispa</name>
    <dbReference type="NCBI Taxonomy" id="3122430"/>
    <lineage>
        <taxon>Eukaryota</taxon>
        <taxon>Metazoa</taxon>
        <taxon>Cnidaria</taxon>
        <taxon>Anthozoa</taxon>
        <taxon>Hexacorallia</taxon>
        <taxon>Actiniaria</taxon>
        <taxon>Stichodactylidae</taxon>
        <taxon>Radianthus</taxon>
    </lineage>
</organism>
<sequence>ALAGAIIAGASLTFQILDKVLAELGQVSRKIAIGIDNESGGSWTAMNAYFRSGTTDVILPEFVPNQKALLYSGRKNRGPDTTGAVGALAYYMSNGNTLGVMFSVPFDYNLYSNWWDVKVYSGKRRADQAMYEDLYYSNPYRGDNGWHQKNLGYGLKMKGIMTSAGEAIMEIRISR</sequence>